<comment type="function">
    <text evidence="1">Required for the assembly and/or stability of the 40S ribosomal subunit. Required for the processing of the 20S rRNA-precursor to mature 18S rRNA in a late step of the maturation of 40S ribosomal subunits.</text>
</comment>
<comment type="subunit">
    <text evidence="1">Component of the small ribosomal subunit. Mature ribosomes consist of a small (40S) and a large (60S) subunit. The 40S subunit contains about 33 different proteins and 1 molecule of RNA (18S). The 60S subunit contains about 49 different proteins and 3 molecules of RNA (25S, 5.8S and 5S). Interacts with RPS21.</text>
</comment>
<comment type="subcellular location">
    <subcellularLocation>
        <location evidence="1">Cytoplasm</location>
    </subcellularLocation>
</comment>
<comment type="similarity">
    <text evidence="1">Belongs to the universal ribosomal protein uS2 family.</text>
</comment>
<gene>
    <name evidence="1" type="primary">RPS0B</name>
    <name type="ORF">Kpol_1010p51</name>
</gene>
<evidence type="ECO:0000255" key="1">
    <source>
        <dbReference type="HAMAP-Rule" id="MF_03015"/>
    </source>
</evidence>
<evidence type="ECO:0000256" key="2">
    <source>
        <dbReference type="SAM" id="MobiDB-lite"/>
    </source>
</evidence>
<evidence type="ECO:0000305" key="3"/>
<protein>
    <recommendedName>
        <fullName evidence="1">Small ribosomal subunit protein uS2B</fullName>
    </recommendedName>
    <alternativeName>
        <fullName evidence="3">40S ribosomal protein S0-B</fullName>
    </alternativeName>
</protein>
<accession>A7TIJ7</accession>
<keyword id="KW-0007">Acetylation</keyword>
<keyword id="KW-0963">Cytoplasm</keyword>
<keyword id="KW-1185">Reference proteome</keyword>
<keyword id="KW-0687">Ribonucleoprotein</keyword>
<keyword id="KW-0689">Ribosomal protein</keyword>
<proteinExistence type="inferred from homology"/>
<organism>
    <name type="scientific">Vanderwaltozyma polyspora (strain ATCC 22028 / DSM 70294 / BCRC 21397 / CBS 2163 / NBRC 10782 / NRRL Y-8283 / UCD 57-17)</name>
    <name type="common">Kluyveromyces polysporus</name>
    <dbReference type="NCBI Taxonomy" id="436907"/>
    <lineage>
        <taxon>Eukaryota</taxon>
        <taxon>Fungi</taxon>
        <taxon>Dikarya</taxon>
        <taxon>Ascomycota</taxon>
        <taxon>Saccharomycotina</taxon>
        <taxon>Saccharomycetes</taxon>
        <taxon>Saccharomycetales</taxon>
        <taxon>Saccharomycetaceae</taxon>
        <taxon>Vanderwaltozyma</taxon>
    </lineage>
</organism>
<feature type="initiator methionine" description="Removed" evidence="1">
    <location>
        <position position="1"/>
    </location>
</feature>
<feature type="chain" id="PRO_0000371652" description="Small ribosomal subunit protein uS2B">
    <location>
        <begin position="2"/>
        <end position="251"/>
    </location>
</feature>
<feature type="region of interest" description="Disordered" evidence="2">
    <location>
        <begin position="214"/>
        <end position="251"/>
    </location>
</feature>
<feature type="compositionally biased region" description="Low complexity" evidence="2">
    <location>
        <begin position="214"/>
        <end position="225"/>
    </location>
</feature>
<feature type="compositionally biased region" description="Acidic residues" evidence="2">
    <location>
        <begin position="226"/>
        <end position="251"/>
    </location>
</feature>
<feature type="modified residue" description="N-acetylserine" evidence="1">
    <location>
        <position position="2"/>
    </location>
</feature>
<sequence>MSLPATFDLTPEDAQLLLAANTHLGARNVQVHQEPYVFNTRPDGVNVINVGKTWEKIVLAARIIAAIPNPEDVCAISSRTYGQRAVLKFSAHTGATPIAGRFTPGSFTNYITRSFKEPRLIIVTDPRSDFQAIKEASYVNIPVIALTDLDSPSEYVDVAIPCNNRGKHSIGLVWYLLAREVLRLRGALVDRTQPWAIMPDLYFYRNPEEVEQQAVEEASATGATEEATEEATEETTEATEWAEDNTENATW</sequence>
<dbReference type="EMBL" id="DS480396">
    <property type="protein sequence ID" value="EDO17935.1"/>
    <property type="molecule type" value="Genomic_DNA"/>
</dbReference>
<dbReference type="RefSeq" id="XP_001645793.1">
    <property type="nucleotide sequence ID" value="XM_001645743.1"/>
</dbReference>
<dbReference type="SMR" id="A7TIJ7"/>
<dbReference type="FunCoup" id="A7TIJ7">
    <property type="interactions" value="1436"/>
</dbReference>
<dbReference type="STRING" id="436907.A7TIJ7"/>
<dbReference type="GeneID" id="5546191"/>
<dbReference type="KEGG" id="vpo:Kpol_1010p51"/>
<dbReference type="eggNOG" id="KOG0830">
    <property type="taxonomic scope" value="Eukaryota"/>
</dbReference>
<dbReference type="HOGENOM" id="CLU_058171_2_0_1"/>
<dbReference type="InParanoid" id="A7TIJ7"/>
<dbReference type="OMA" id="WEGDAEW"/>
<dbReference type="OrthoDB" id="414863at2759"/>
<dbReference type="PhylomeDB" id="A7TIJ7"/>
<dbReference type="Proteomes" id="UP000000267">
    <property type="component" value="Unassembled WGS sequence"/>
</dbReference>
<dbReference type="GO" id="GO:0022627">
    <property type="term" value="C:cytosolic small ribosomal subunit"/>
    <property type="evidence" value="ECO:0007669"/>
    <property type="project" value="UniProtKB-UniRule"/>
</dbReference>
<dbReference type="GO" id="GO:0003735">
    <property type="term" value="F:structural constituent of ribosome"/>
    <property type="evidence" value="ECO:0007669"/>
    <property type="project" value="UniProtKB-UniRule"/>
</dbReference>
<dbReference type="GO" id="GO:0000028">
    <property type="term" value="P:ribosomal small subunit assembly"/>
    <property type="evidence" value="ECO:0007669"/>
    <property type="project" value="UniProtKB-UniRule"/>
</dbReference>
<dbReference type="GO" id="GO:0006412">
    <property type="term" value="P:translation"/>
    <property type="evidence" value="ECO:0007669"/>
    <property type="project" value="UniProtKB-UniRule"/>
</dbReference>
<dbReference type="CDD" id="cd01425">
    <property type="entry name" value="RPS2"/>
    <property type="match status" value="1"/>
</dbReference>
<dbReference type="FunFam" id="3.40.50.10490:FF:000010">
    <property type="entry name" value="40S ribosomal protein S0"/>
    <property type="match status" value="1"/>
</dbReference>
<dbReference type="Gene3D" id="3.40.50.10490">
    <property type="entry name" value="Glucose-6-phosphate isomerase like protein, domain 1"/>
    <property type="match status" value="1"/>
</dbReference>
<dbReference type="HAMAP" id="MF_03015">
    <property type="entry name" value="Ribosomal_S2_euk"/>
    <property type="match status" value="1"/>
</dbReference>
<dbReference type="InterPro" id="IPR001865">
    <property type="entry name" value="Ribosomal_uS2"/>
</dbReference>
<dbReference type="InterPro" id="IPR018130">
    <property type="entry name" value="Ribosomal_uS2_CS"/>
</dbReference>
<dbReference type="InterPro" id="IPR027498">
    <property type="entry name" value="Ribosomal_uS2_euk"/>
</dbReference>
<dbReference type="InterPro" id="IPR005707">
    <property type="entry name" value="Ribosomal_uS2_euk/arc"/>
</dbReference>
<dbReference type="InterPro" id="IPR023591">
    <property type="entry name" value="Ribosomal_uS2_flav_dom_sf"/>
</dbReference>
<dbReference type="NCBIfam" id="TIGR01012">
    <property type="entry name" value="uS2_euk_arch"/>
    <property type="match status" value="1"/>
</dbReference>
<dbReference type="PANTHER" id="PTHR11489">
    <property type="entry name" value="40S RIBOSOMAL PROTEIN SA"/>
    <property type="match status" value="1"/>
</dbReference>
<dbReference type="Pfam" id="PF00318">
    <property type="entry name" value="Ribosomal_S2"/>
    <property type="match status" value="2"/>
</dbReference>
<dbReference type="PRINTS" id="PR00395">
    <property type="entry name" value="RIBOSOMALS2"/>
</dbReference>
<dbReference type="SUPFAM" id="SSF52313">
    <property type="entry name" value="Ribosomal protein S2"/>
    <property type="match status" value="1"/>
</dbReference>
<dbReference type="PROSITE" id="PS00962">
    <property type="entry name" value="RIBOSOMAL_S2_1"/>
    <property type="match status" value="1"/>
</dbReference>
<dbReference type="PROSITE" id="PS00963">
    <property type="entry name" value="RIBOSOMAL_S2_2"/>
    <property type="match status" value="1"/>
</dbReference>
<name>RSSA2_VANPO</name>
<reference key="1">
    <citation type="journal article" date="2007" name="Proc. Natl. Acad. Sci. U.S.A.">
        <title>Independent sorting-out of thousands of duplicated gene pairs in two yeast species descended from a whole-genome duplication.</title>
        <authorList>
            <person name="Scannell D.R."/>
            <person name="Frank A.C."/>
            <person name="Conant G.C."/>
            <person name="Byrne K.P."/>
            <person name="Woolfit M."/>
            <person name="Wolfe K.H."/>
        </authorList>
    </citation>
    <scope>NUCLEOTIDE SEQUENCE [LARGE SCALE GENOMIC DNA]</scope>
    <source>
        <strain>ATCC 22028 / DSM 70294 / BCRC 21397 / CBS 2163 / NBRC 10782 / NRRL Y-8283 / UCD 57-17</strain>
    </source>
</reference>